<organism>
    <name type="scientific">Arabidopsis thaliana</name>
    <name type="common">Mouse-ear cress</name>
    <dbReference type="NCBI Taxonomy" id="3702"/>
    <lineage>
        <taxon>Eukaryota</taxon>
        <taxon>Viridiplantae</taxon>
        <taxon>Streptophyta</taxon>
        <taxon>Embryophyta</taxon>
        <taxon>Tracheophyta</taxon>
        <taxon>Spermatophyta</taxon>
        <taxon>Magnoliopsida</taxon>
        <taxon>eudicotyledons</taxon>
        <taxon>Gunneridae</taxon>
        <taxon>Pentapetalae</taxon>
        <taxon>rosids</taxon>
        <taxon>malvids</taxon>
        <taxon>Brassicales</taxon>
        <taxon>Brassicaceae</taxon>
        <taxon>Camelineae</taxon>
        <taxon>Arabidopsis</taxon>
    </lineage>
</organism>
<gene>
    <name evidence="17" type="primary">ARAC4</name>
    <name evidence="16" type="synonym">ROP2</name>
    <name evidence="19" type="ordered locus">At1g20090</name>
    <name evidence="20" type="ORF">T20H2.12</name>
</gene>
<sequence length="195" mass="21636">MASRFIKCVTVGDGAVGKTCMLISYTSNTFPTDYVPTVFDNFSANVVVDGNTVNLGLWDTAGQEDYNRLRPLSYRGADVFILAFSLISKASYENIAKKWIPELRHYAPGVPIILVGTKLDLRDDKQFFIDHPGAVPITTNQGEELKKLIGSAVYIECSSKTQQNVKAVFDAAIKVVLQPPKQKKKKKNKNRCAFL</sequence>
<reference key="1">
    <citation type="journal article" date="1997" name="Plant Mol. Biol.">
        <title>Cloning and characterization of rac-like cDNAs from Arabidopsis thaliana.</title>
        <authorList>
            <person name="Winge P."/>
            <person name="Brembu T."/>
            <person name="Bones A.M."/>
        </authorList>
    </citation>
    <scope>NUCLEOTIDE SEQUENCE [MRNA]</scope>
    <source>
        <strain>cv. Columbia</strain>
    </source>
</reference>
<reference key="2">
    <citation type="journal article" date="1998" name="Plant Physiol.">
        <title>Arabidopsis Rho-related GTPases: differential gene expression in pollen and polar localization in fission yeast.</title>
        <authorList>
            <person name="Li H."/>
            <person name="Wu G."/>
            <person name="Ware D."/>
            <person name="Davis K.R."/>
            <person name="Yang Z."/>
        </authorList>
    </citation>
    <scope>NUCLEOTIDE SEQUENCE [GENOMIC DNA]</scope>
    <scope>TISSUE SPECIFICITY</scope>
    <source>
        <strain>cv. Columbia</strain>
    </source>
</reference>
<reference key="3">
    <citation type="journal article" date="2000" name="Genetics">
        <title>Genetic structure and evolution of RAC-GTPases in Arabidopsis thaliana.</title>
        <authorList>
            <person name="Winge P."/>
            <person name="Brembu T."/>
            <person name="Kristensen R."/>
            <person name="Bones A.M."/>
        </authorList>
    </citation>
    <scope>NUCLEOTIDE SEQUENCE [GENOMIC DNA]</scope>
    <source>
        <strain>cv. Landsberg erecta</strain>
    </source>
</reference>
<reference key="4">
    <citation type="journal article" date="2000" name="Nature">
        <title>Sequence and analysis of chromosome 1 of the plant Arabidopsis thaliana.</title>
        <authorList>
            <person name="Theologis A."/>
            <person name="Ecker J.R."/>
            <person name="Palm C.J."/>
            <person name="Federspiel N.A."/>
            <person name="Kaul S."/>
            <person name="White O."/>
            <person name="Alonso J."/>
            <person name="Altafi H."/>
            <person name="Araujo R."/>
            <person name="Bowman C.L."/>
            <person name="Brooks S.Y."/>
            <person name="Buehler E."/>
            <person name="Chan A."/>
            <person name="Chao Q."/>
            <person name="Chen H."/>
            <person name="Cheuk R.F."/>
            <person name="Chin C.W."/>
            <person name="Chung M.K."/>
            <person name="Conn L."/>
            <person name="Conway A.B."/>
            <person name="Conway A.R."/>
            <person name="Creasy T.H."/>
            <person name="Dewar K."/>
            <person name="Dunn P."/>
            <person name="Etgu P."/>
            <person name="Feldblyum T.V."/>
            <person name="Feng J.-D."/>
            <person name="Fong B."/>
            <person name="Fujii C.Y."/>
            <person name="Gill J.E."/>
            <person name="Goldsmith A.D."/>
            <person name="Haas B."/>
            <person name="Hansen N.F."/>
            <person name="Hughes B."/>
            <person name="Huizar L."/>
            <person name="Hunter J.L."/>
            <person name="Jenkins J."/>
            <person name="Johnson-Hopson C."/>
            <person name="Khan S."/>
            <person name="Khaykin E."/>
            <person name="Kim C.J."/>
            <person name="Koo H.L."/>
            <person name="Kremenetskaia I."/>
            <person name="Kurtz D.B."/>
            <person name="Kwan A."/>
            <person name="Lam B."/>
            <person name="Langin-Hooper S."/>
            <person name="Lee A."/>
            <person name="Lee J.M."/>
            <person name="Lenz C.A."/>
            <person name="Li J.H."/>
            <person name="Li Y.-P."/>
            <person name="Lin X."/>
            <person name="Liu S.X."/>
            <person name="Liu Z.A."/>
            <person name="Luros J.S."/>
            <person name="Maiti R."/>
            <person name="Marziali A."/>
            <person name="Militscher J."/>
            <person name="Miranda M."/>
            <person name="Nguyen M."/>
            <person name="Nierman W.C."/>
            <person name="Osborne B.I."/>
            <person name="Pai G."/>
            <person name="Peterson J."/>
            <person name="Pham P.K."/>
            <person name="Rizzo M."/>
            <person name="Rooney T."/>
            <person name="Rowley D."/>
            <person name="Sakano H."/>
            <person name="Salzberg S.L."/>
            <person name="Schwartz J.R."/>
            <person name="Shinn P."/>
            <person name="Southwick A.M."/>
            <person name="Sun H."/>
            <person name="Tallon L.J."/>
            <person name="Tambunga G."/>
            <person name="Toriumi M.J."/>
            <person name="Town C.D."/>
            <person name="Utterback T."/>
            <person name="Van Aken S."/>
            <person name="Vaysberg M."/>
            <person name="Vysotskaia V.S."/>
            <person name="Walker M."/>
            <person name="Wu D."/>
            <person name="Yu G."/>
            <person name="Fraser C.M."/>
            <person name="Venter J.C."/>
            <person name="Davis R.W."/>
        </authorList>
    </citation>
    <scope>NUCLEOTIDE SEQUENCE [LARGE SCALE GENOMIC DNA]</scope>
    <source>
        <strain>cv. Columbia</strain>
    </source>
</reference>
<reference key="5">
    <citation type="journal article" date="2017" name="Plant J.">
        <title>Araport11: a complete reannotation of the Arabidopsis thaliana reference genome.</title>
        <authorList>
            <person name="Cheng C.Y."/>
            <person name="Krishnakumar V."/>
            <person name="Chan A.P."/>
            <person name="Thibaud-Nissen F."/>
            <person name="Schobel S."/>
            <person name="Town C.D."/>
        </authorList>
    </citation>
    <scope>GENOME REANNOTATION</scope>
    <source>
        <strain>cv. Columbia</strain>
    </source>
</reference>
<reference key="6">
    <citation type="journal article" date="2003" name="Science">
        <title>Empirical analysis of transcriptional activity in the Arabidopsis genome.</title>
        <authorList>
            <person name="Yamada K."/>
            <person name="Lim J."/>
            <person name="Dale J.M."/>
            <person name="Chen H."/>
            <person name="Shinn P."/>
            <person name="Palm C.J."/>
            <person name="Southwick A.M."/>
            <person name="Wu H.C."/>
            <person name="Kim C.J."/>
            <person name="Nguyen M."/>
            <person name="Pham P.K."/>
            <person name="Cheuk R.F."/>
            <person name="Karlin-Newmann G."/>
            <person name="Liu S.X."/>
            <person name="Lam B."/>
            <person name="Sakano H."/>
            <person name="Wu T."/>
            <person name="Yu G."/>
            <person name="Miranda M."/>
            <person name="Quach H.L."/>
            <person name="Tripp M."/>
            <person name="Chang C.H."/>
            <person name="Lee J.M."/>
            <person name="Toriumi M.J."/>
            <person name="Chan M.M."/>
            <person name="Tang C.C."/>
            <person name="Onodera C.S."/>
            <person name="Deng J.M."/>
            <person name="Akiyama K."/>
            <person name="Ansari Y."/>
            <person name="Arakawa T."/>
            <person name="Banh J."/>
            <person name="Banno F."/>
            <person name="Bowser L."/>
            <person name="Brooks S.Y."/>
            <person name="Carninci P."/>
            <person name="Chao Q."/>
            <person name="Choy N."/>
            <person name="Enju A."/>
            <person name="Goldsmith A.D."/>
            <person name="Gurjal M."/>
            <person name="Hansen N.F."/>
            <person name="Hayashizaki Y."/>
            <person name="Johnson-Hopson C."/>
            <person name="Hsuan V.W."/>
            <person name="Iida K."/>
            <person name="Karnes M."/>
            <person name="Khan S."/>
            <person name="Koesema E."/>
            <person name="Ishida J."/>
            <person name="Jiang P.X."/>
            <person name="Jones T."/>
            <person name="Kawai J."/>
            <person name="Kamiya A."/>
            <person name="Meyers C."/>
            <person name="Nakajima M."/>
            <person name="Narusaka M."/>
            <person name="Seki M."/>
            <person name="Sakurai T."/>
            <person name="Satou M."/>
            <person name="Tamse R."/>
            <person name="Vaysberg M."/>
            <person name="Wallender E.K."/>
            <person name="Wong C."/>
            <person name="Yamamura Y."/>
            <person name="Yuan S."/>
            <person name="Shinozaki K."/>
            <person name="Davis R.W."/>
            <person name="Theologis A."/>
            <person name="Ecker J.R."/>
        </authorList>
    </citation>
    <scope>NUCLEOTIDE SEQUENCE [LARGE SCALE MRNA]</scope>
    <source>
        <strain>cv. Columbia</strain>
    </source>
</reference>
<reference key="7">
    <citation type="journal article" date="2002" name="Plant Cell">
        <title>The Arabidopsis Rop2 GTPase is a positive regulator of both root hair initiation and tip growth.</title>
        <authorList>
            <person name="Jones M.A."/>
            <person name="Shen J."/>
            <person name="Fu Y."/>
            <person name="Li H."/>
            <person name="Yang Z."/>
            <person name="Grierson C.S."/>
        </authorList>
    </citation>
    <scope>FUNCTION</scope>
    <scope>TISSUE SPECIFICITY</scope>
</reference>
<reference key="8">
    <citation type="journal article" date="2004" name="Development">
        <title>Interchangeable functions of Arabidopsis PIROGI and the human WAVE complex subunit SRA1 during leaf epidermal development.</title>
        <authorList>
            <person name="Basu D."/>
            <person name="El-Din El-Assal S."/>
            <person name="Le J."/>
            <person name="Mallery E.L."/>
            <person name="Szymanski D.B."/>
        </authorList>
    </citation>
    <scope>INTERACTION WITH PIR</scope>
</reference>
<reference key="9">
    <citation type="journal article" date="2007" name="Development">
        <title>The role of Arabidopsis SCAR genes in ARP2-ARP3-dependent cell morphogenesis.</title>
        <authorList>
            <person name="Uhrig J.F."/>
            <person name="Mutondo M."/>
            <person name="Zimmermann I."/>
            <person name="Deeks M.J."/>
            <person name="Machesky L.M."/>
            <person name="Thomas P."/>
            <person name="Uhrig S."/>
            <person name="Rambke C."/>
            <person name="Hussey P.J."/>
            <person name="Huelskamp M."/>
        </authorList>
    </citation>
    <scope>INTERACTION WITH SPK1</scope>
</reference>
<reference key="10">
    <citation type="journal article" date="2008" name="Proc. Natl. Acad. Sci. U.S.A.">
        <title>A SPIKE1 signaling complex controls actin-dependent cell morphogenesis through the heteromeric WAVE and ARP2/3 complexes.</title>
        <authorList>
            <person name="Basu D."/>
            <person name="Le J."/>
            <person name="Zakharova T."/>
            <person name="Mallery E.L."/>
            <person name="Szymanski D.B."/>
        </authorList>
    </citation>
    <scope>INTERACTION WITH SPK1</scope>
    <source>
        <strain>cv. Columbia</strain>
    </source>
</reference>
<reference key="11">
    <citation type="journal article" date="2010" name="Eur. J. Cell Biol.">
        <title>RIP3 and AtKinesin-13A - a novel interaction linking Rho proteins of plants to microtubules.</title>
        <authorList>
            <person name="Mucha E."/>
            <person name="Hoefle C."/>
            <person name="Huckelhoven R."/>
            <person name="Berken A."/>
        </authorList>
    </citation>
    <scope>INTERACTION WITH ICR1 AND ICR5</scope>
</reference>
<reference key="12">
    <citation type="journal article" date="2015" name="Nat. Plants">
        <title>Arabidopsis D6PK is a lipid domain-dependent mediator of root epidermal planar polarity.</title>
        <authorList>
            <person name="Stanislas T."/>
            <person name="Hueser A."/>
            <person name="Barbosa I.C.R."/>
            <person name="Kiefer C.S."/>
            <person name="Brackmann K."/>
            <person name="Pietra S."/>
            <person name="Gustavsson A."/>
            <person name="Zourelidou M."/>
            <person name="Schwechheimer C."/>
            <person name="Grebe M."/>
        </authorList>
    </citation>
    <scope>SUBCELLULAR LOCATION</scope>
    <source>
        <strain>cv. Columbia</strain>
    </source>
</reference>
<reference key="13">
    <citation type="journal article" date="2019" name="Development">
        <title>Rho-of-plant activated root hair formation requires Arabidopsis YIP4a/b gene function.</title>
        <authorList>
            <person name="Gendre D."/>
            <person name="Baral A."/>
            <person name="Dang X."/>
            <person name="Esnay N."/>
            <person name="Boutte Y."/>
            <person name="Stanislas T."/>
            <person name="Vain T."/>
            <person name="Claverol S."/>
            <person name="Gustavsson A."/>
            <person name="Lin D."/>
            <person name="Grebe M."/>
            <person name="Bhalerao R.P."/>
        </authorList>
    </citation>
    <scope>FUNCTION</scope>
    <scope>DISRUPTION PHENOTYPE</scope>
    <scope>DEVELOPMENTAL STAGE</scope>
    <scope>SUBCELLULAR LOCATION</scope>
    <source>
        <strain>cv. Columbia</strain>
    </source>
</reference>
<reference key="14">
    <citation type="journal article" date="2019" name="Int. J. Mol. Sci.">
        <title>Cortical microtubule organization during petal morphogenesis in Arabidopsis.</title>
        <authorList>
            <person name="Yang Y."/>
            <person name="Huang W."/>
            <person name="Wu E."/>
            <person name="Lin C."/>
            <person name="Chen B."/>
            <person name="Lin D."/>
        </authorList>
    </citation>
    <scope>FUNCTION</scope>
    <scope>DISRUPTION PHENOTYPE</scope>
    <scope>REVIEW ON ANISOTROPIC PETAL GROWTH</scope>
</reference>
<comment type="function">
    <text evidence="1 6 12 13">Inactive GDP-bound Rho GTPases reside in the cytosol, are found in a complex with Rho GDP-dissociation inhibitors (Rho GDIs), and are released from the GDI protein in order to translocate to membranes upon activation (By similarity). Involved in cell polarity control during the actin-dependent tip growth of root hairs, thus regulating root hair length and root hair initiation (PubMed:30770391). Contributes, in a SPK1-dependent manner, to the prevention of cortical microtubules organization into parallel arrays oriented perpendicular to the axis of cell elongation to limit anisotropic cell growth during petal development (PubMed:31623377). May regulate a WAVE complex that activates the Arp2/3 complex.</text>
</comment>
<comment type="subunit">
    <text evidence="7 8 9 10">Interacts with SPK1, ICR1, ICR5 and PIR.</text>
</comment>
<comment type="interaction">
    <interactant intactId="EBI-1548187">
        <id>Q38919</id>
    </interactant>
    <interactant intactId="EBI-15880405">
        <id>Q9SCZ4</id>
        <label>FER</label>
    </interactant>
    <organismsDiffer>false</organismsDiffer>
    <experiments>2</experiments>
</comment>
<comment type="interaction">
    <interactant intactId="EBI-1548187">
        <id>Q38919</id>
    </interactant>
    <interactant intactId="EBI-1547917">
        <id>Q8SAB7</id>
        <label>SPK1</label>
    </interactant>
    <organismsDiffer>false</organismsDiffer>
    <experiments>3</experiments>
</comment>
<comment type="subcellular location">
    <subcellularLocation>
        <location evidence="3">Cytoplasm</location>
    </subcellularLocation>
    <subcellularLocation>
        <location evidence="11 12">Cell membrane</location>
        <topology evidence="5">Peripheral membrane protein</topology>
    </subcellularLocation>
    <text evidence="11 12">Associated with the membrane when activated. The localization to the plasma membrane requires YIP4A and YIP4B (PubMed:30770391). Accumulates in a sterol-enriched, polar membrane domain during root hair initiation (PubMed:27251533).</text>
</comment>
<comment type="tissue specificity">
    <text evidence="6 14">Ubiquitous.</text>
</comment>
<comment type="developmental stage">
    <text evidence="12">In root trichoblasts, accumulates into patches at the basal end of the cell before a hair bulge is visible and remain concentrated at the tip of the bulge and in the growing hair.</text>
</comment>
<comment type="disruption phenotype">
    <text evidence="12 13">Fewer and shorter root hairs (PubMed:30770391). Plants lacking both ARAC4/ROP2 and ARAC3/ROP6 exhibit long and narrow petals, as well as increased anisotropic cell expansion of petal epidermis during flower development, as a result of increased microtubule ordering in petal abaxial epidermal cells (PubMed:31623377).</text>
</comment>
<comment type="similarity">
    <text evidence="18">Belongs to the small GTPase superfamily. Rho family.</text>
</comment>
<protein>
    <recommendedName>
        <fullName evidence="17">Rac-like GTP-binding protein ARAC4</fullName>
        <shortName evidence="15">AtRAC4</shortName>
    </recommendedName>
    <alternativeName>
        <fullName evidence="16">GTPase protein ROP2</fullName>
    </alternativeName>
</protein>
<dbReference type="EMBL" id="U45236">
    <property type="protein sequence ID" value="AAC49854.1"/>
    <property type="molecule type" value="mRNA"/>
</dbReference>
<dbReference type="EMBL" id="U49972">
    <property type="protein sequence ID" value="AAC78391.1"/>
    <property type="molecule type" value="Genomic_DNA"/>
</dbReference>
<dbReference type="EMBL" id="AF115471">
    <property type="protein sequence ID" value="AAF40243.1"/>
    <property type="molecule type" value="Genomic_DNA"/>
</dbReference>
<dbReference type="EMBL" id="AC022472">
    <property type="protein sequence ID" value="AAF79903.1"/>
    <property type="molecule type" value="Genomic_DNA"/>
</dbReference>
<dbReference type="EMBL" id="CP002684">
    <property type="protein sequence ID" value="AEE29934.1"/>
    <property type="molecule type" value="Genomic_DNA"/>
</dbReference>
<dbReference type="EMBL" id="AF332438">
    <property type="protein sequence ID" value="AAG48801.1"/>
    <property type="molecule type" value="mRNA"/>
</dbReference>
<dbReference type="EMBL" id="AF360154">
    <property type="protein sequence ID" value="AAK25864.1"/>
    <property type="molecule type" value="mRNA"/>
</dbReference>
<dbReference type="EMBL" id="AY056308">
    <property type="protein sequence ID" value="AAL07157.1"/>
    <property type="molecule type" value="mRNA"/>
</dbReference>
<dbReference type="PIR" id="T48864">
    <property type="entry name" value="T48864"/>
</dbReference>
<dbReference type="RefSeq" id="NP_173437.1">
    <property type="nucleotide sequence ID" value="NM_101863.4"/>
</dbReference>
<dbReference type="SMR" id="Q38919"/>
<dbReference type="BioGRID" id="23837">
    <property type="interactions" value="9"/>
</dbReference>
<dbReference type="DIP" id="DIP-29818N"/>
<dbReference type="FunCoup" id="Q38919">
    <property type="interactions" value="2905"/>
</dbReference>
<dbReference type="IntAct" id="Q38919">
    <property type="interactions" value="5"/>
</dbReference>
<dbReference type="STRING" id="3702.Q38919"/>
<dbReference type="PaxDb" id="3702-AT1G20090.1"/>
<dbReference type="ProteomicsDB" id="236689"/>
<dbReference type="EnsemblPlants" id="AT1G20090.1">
    <property type="protein sequence ID" value="AT1G20090.1"/>
    <property type="gene ID" value="AT1G20090"/>
</dbReference>
<dbReference type="GeneID" id="838598"/>
<dbReference type="Gramene" id="AT1G20090.1">
    <property type="protein sequence ID" value="AT1G20090.1"/>
    <property type="gene ID" value="AT1G20090"/>
</dbReference>
<dbReference type="KEGG" id="ath:AT1G20090"/>
<dbReference type="Araport" id="AT1G20090"/>
<dbReference type="TAIR" id="AT1G20090">
    <property type="gene designation" value="ROP2"/>
</dbReference>
<dbReference type="eggNOG" id="KOG0393">
    <property type="taxonomic scope" value="Eukaryota"/>
</dbReference>
<dbReference type="HOGENOM" id="CLU_041217_21_3_1"/>
<dbReference type="InParanoid" id="Q38919"/>
<dbReference type="OMA" id="YHECSAR"/>
<dbReference type="OrthoDB" id="1050434at2759"/>
<dbReference type="PhylomeDB" id="Q38919"/>
<dbReference type="PRO" id="PR:Q38919"/>
<dbReference type="Proteomes" id="UP000006548">
    <property type="component" value="Chromosome 1"/>
</dbReference>
<dbReference type="ExpressionAtlas" id="Q38919">
    <property type="expression patterns" value="baseline and differential"/>
</dbReference>
<dbReference type="GO" id="GO:0005737">
    <property type="term" value="C:cytoplasm"/>
    <property type="evidence" value="ECO:0007005"/>
    <property type="project" value="TAIR"/>
</dbReference>
<dbReference type="GO" id="GO:0005730">
    <property type="term" value="C:nucleolus"/>
    <property type="evidence" value="ECO:0007005"/>
    <property type="project" value="TAIR"/>
</dbReference>
<dbReference type="GO" id="GO:0005634">
    <property type="term" value="C:nucleus"/>
    <property type="evidence" value="ECO:0007005"/>
    <property type="project" value="TAIR"/>
</dbReference>
<dbReference type="GO" id="GO:0005886">
    <property type="term" value="C:plasma membrane"/>
    <property type="evidence" value="ECO:0000314"/>
    <property type="project" value="UniProtKB"/>
</dbReference>
<dbReference type="GO" id="GO:0005525">
    <property type="term" value="F:GTP binding"/>
    <property type="evidence" value="ECO:0000250"/>
    <property type="project" value="TAIR"/>
</dbReference>
<dbReference type="GO" id="GO:0003924">
    <property type="term" value="F:GTPase activity"/>
    <property type="evidence" value="ECO:0007669"/>
    <property type="project" value="InterPro"/>
</dbReference>
<dbReference type="GO" id="GO:0051211">
    <property type="term" value="P:anisotropic cell growth"/>
    <property type="evidence" value="ECO:0000315"/>
    <property type="project" value="UniProtKB"/>
</dbReference>
<dbReference type="GO" id="GO:0000902">
    <property type="term" value="P:cell morphogenesis"/>
    <property type="evidence" value="ECO:0000316"/>
    <property type="project" value="TAIR"/>
</dbReference>
<dbReference type="GO" id="GO:0043622">
    <property type="term" value="P:cortical microtubule organization"/>
    <property type="evidence" value="ECO:0000315"/>
    <property type="project" value="UniProtKB"/>
</dbReference>
<dbReference type="GO" id="GO:0000226">
    <property type="term" value="P:microtubule cytoskeleton organization"/>
    <property type="evidence" value="ECO:0000315"/>
    <property type="project" value="TAIR"/>
</dbReference>
<dbReference type="GO" id="GO:0048446">
    <property type="term" value="P:petal morphogenesis"/>
    <property type="evidence" value="ECO:0000315"/>
    <property type="project" value="UniProtKB"/>
</dbReference>
<dbReference type="GO" id="GO:0009860">
    <property type="term" value="P:pollen tube growth"/>
    <property type="evidence" value="ECO:0000315"/>
    <property type="project" value="TAIR"/>
</dbReference>
<dbReference type="GO" id="GO:0010119">
    <property type="term" value="P:regulation of stomatal movement"/>
    <property type="evidence" value="ECO:0000315"/>
    <property type="project" value="TAIR"/>
</dbReference>
<dbReference type="GO" id="GO:0009416">
    <property type="term" value="P:response to light stimulus"/>
    <property type="evidence" value="ECO:0000314"/>
    <property type="project" value="TAIR"/>
</dbReference>
<dbReference type="GO" id="GO:0048767">
    <property type="term" value="P:root hair elongation"/>
    <property type="evidence" value="ECO:0000315"/>
    <property type="project" value="UniProtKB"/>
</dbReference>
<dbReference type="GO" id="GO:0048766">
    <property type="term" value="P:root hair initiation"/>
    <property type="evidence" value="ECO:0000315"/>
    <property type="project" value="UniProtKB"/>
</dbReference>
<dbReference type="GO" id="GO:0007264">
    <property type="term" value="P:small GTPase-mediated signal transduction"/>
    <property type="evidence" value="ECO:0007669"/>
    <property type="project" value="InterPro"/>
</dbReference>
<dbReference type="CDD" id="cd04133">
    <property type="entry name" value="Rop_like"/>
    <property type="match status" value="1"/>
</dbReference>
<dbReference type="FunFam" id="3.40.50.300:FF:000535">
    <property type="entry name" value="rac-like GTP-binding protein RAC2"/>
    <property type="match status" value="1"/>
</dbReference>
<dbReference type="Gene3D" id="3.40.50.300">
    <property type="entry name" value="P-loop containing nucleotide triphosphate hydrolases"/>
    <property type="match status" value="1"/>
</dbReference>
<dbReference type="InterPro" id="IPR027417">
    <property type="entry name" value="P-loop_NTPase"/>
</dbReference>
<dbReference type="InterPro" id="IPR005225">
    <property type="entry name" value="Small_GTP-bd"/>
</dbReference>
<dbReference type="InterPro" id="IPR001806">
    <property type="entry name" value="Small_GTPase"/>
</dbReference>
<dbReference type="InterPro" id="IPR003578">
    <property type="entry name" value="Small_GTPase_Rho"/>
</dbReference>
<dbReference type="NCBIfam" id="TIGR00231">
    <property type="entry name" value="small_GTP"/>
    <property type="match status" value="1"/>
</dbReference>
<dbReference type="PANTHER" id="PTHR24072">
    <property type="entry name" value="RHO FAMILY GTPASE"/>
    <property type="match status" value="1"/>
</dbReference>
<dbReference type="Pfam" id="PF00071">
    <property type="entry name" value="Ras"/>
    <property type="match status" value="1"/>
</dbReference>
<dbReference type="PRINTS" id="PR00449">
    <property type="entry name" value="RASTRNSFRMNG"/>
</dbReference>
<dbReference type="SMART" id="SM00175">
    <property type="entry name" value="RAB"/>
    <property type="match status" value="1"/>
</dbReference>
<dbReference type="SMART" id="SM00173">
    <property type="entry name" value="RAS"/>
    <property type="match status" value="1"/>
</dbReference>
<dbReference type="SMART" id="SM00174">
    <property type="entry name" value="RHO"/>
    <property type="match status" value="1"/>
</dbReference>
<dbReference type="SUPFAM" id="SSF52540">
    <property type="entry name" value="P-loop containing nucleoside triphosphate hydrolases"/>
    <property type="match status" value="1"/>
</dbReference>
<dbReference type="PROSITE" id="PS51420">
    <property type="entry name" value="RHO"/>
    <property type="match status" value="1"/>
</dbReference>
<evidence type="ECO:0000250" key="1"/>
<evidence type="ECO:0000250" key="2">
    <source>
        <dbReference type="UniProtKB" id="P61586"/>
    </source>
</evidence>
<evidence type="ECO:0000250" key="3">
    <source>
        <dbReference type="UniProtKB" id="Q38937"/>
    </source>
</evidence>
<evidence type="ECO:0000250" key="4">
    <source>
        <dbReference type="UniProtKB" id="Q92730"/>
    </source>
</evidence>
<evidence type="ECO:0000255" key="5"/>
<evidence type="ECO:0000269" key="6">
    <source>
    </source>
</evidence>
<evidence type="ECO:0000269" key="7">
    <source>
    </source>
</evidence>
<evidence type="ECO:0000269" key="8">
    <source>
    </source>
</evidence>
<evidence type="ECO:0000269" key="9">
    <source>
    </source>
</evidence>
<evidence type="ECO:0000269" key="10">
    <source>
    </source>
</evidence>
<evidence type="ECO:0000269" key="11">
    <source>
    </source>
</evidence>
<evidence type="ECO:0000269" key="12">
    <source>
    </source>
</evidence>
<evidence type="ECO:0000269" key="13">
    <source>
    </source>
</evidence>
<evidence type="ECO:0000269" key="14">
    <source>
    </source>
</evidence>
<evidence type="ECO:0000303" key="15">
    <source>
    </source>
</evidence>
<evidence type="ECO:0000303" key="16">
    <source>
    </source>
</evidence>
<evidence type="ECO:0000303" key="17">
    <source>
    </source>
</evidence>
<evidence type="ECO:0000305" key="18"/>
<evidence type="ECO:0000312" key="19">
    <source>
        <dbReference type="Araport" id="AT1G20090"/>
    </source>
</evidence>
<evidence type="ECO:0000312" key="20">
    <source>
        <dbReference type="EMBL" id="AAF79903.1"/>
    </source>
</evidence>
<name>RAC4_ARATH</name>
<accession>Q38919</accession>
<keyword id="KW-1003">Cell membrane</keyword>
<keyword id="KW-0963">Cytoplasm</keyword>
<keyword id="KW-0342">GTP-binding</keyword>
<keyword id="KW-0449">Lipoprotein</keyword>
<keyword id="KW-0472">Membrane</keyword>
<keyword id="KW-0488">Methylation</keyword>
<keyword id="KW-0547">Nucleotide-binding</keyword>
<keyword id="KW-0636">Prenylation</keyword>
<keyword id="KW-1185">Reference proteome</keyword>
<feature type="chain" id="PRO_0000198918" description="Rac-like GTP-binding protein ARAC4">
    <location>
        <begin position="1"/>
        <end position="192"/>
    </location>
</feature>
<feature type="propeptide" id="PRO_0000227583" description="Removed in mature form" evidence="5">
    <location>
        <begin position="193"/>
        <end position="195"/>
    </location>
</feature>
<feature type="short sequence motif" description="Effector region" evidence="5">
    <location>
        <begin position="34"/>
        <end position="42"/>
    </location>
</feature>
<feature type="binding site" evidence="2">
    <location>
        <begin position="12"/>
        <end position="19"/>
    </location>
    <ligand>
        <name>GTP</name>
        <dbReference type="ChEBI" id="CHEBI:37565"/>
    </ligand>
</feature>
<feature type="binding site" evidence="4">
    <location>
        <begin position="30"/>
        <end position="37"/>
    </location>
    <ligand>
        <name>GTP</name>
        <dbReference type="ChEBI" id="CHEBI:37565"/>
    </ligand>
</feature>
<feature type="binding site" evidence="4">
    <location>
        <begin position="59"/>
        <end position="63"/>
    </location>
    <ligand>
        <name>GTP</name>
        <dbReference type="ChEBI" id="CHEBI:37565"/>
    </ligand>
</feature>
<feature type="binding site" evidence="2">
    <location>
        <begin position="117"/>
        <end position="120"/>
    </location>
    <ligand>
        <name>GTP</name>
        <dbReference type="ChEBI" id="CHEBI:37565"/>
    </ligand>
</feature>
<feature type="modified residue" description="Cysteine methyl ester" evidence="5">
    <location>
        <position position="192"/>
    </location>
</feature>
<feature type="lipid moiety-binding region" description="S-geranylgeranyl cysteine" evidence="5">
    <location>
        <position position="192"/>
    </location>
</feature>
<proteinExistence type="evidence at protein level"/>